<keyword id="KW-0025">Alternative splicing</keyword>
<keyword id="KW-0067">ATP-binding</keyword>
<keyword id="KW-0175">Coiled coil</keyword>
<keyword id="KW-0963">Cytoplasm</keyword>
<keyword id="KW-0217">Developmental protein</keyword>
<keyword id="KW-0418">Kinase</keyword>
<keyword id="KW-0547">Nucleotide-binding</keyword>
<keyword id="KW-0597">Phosphoprotein</keyword>
<keyword id="KW-1185">Reference proteome</keyword>
<keyword id="KW-0723">Serine/threonine-protein kinase</keyword>
<keyword id="KW-0808">Transferase</keyword>
<evidence type="ECO:0000250" key="1">
    <source>
        <dbReference type="UniProtKB" id="Q9H4A3"/>
    </source>
</evidence>
<evidence type="ECO:0000250" key="2">
    <source>
        <dbReference type="UniProtKB" id="X5M5N0"/>
    </source>
</evidence>
<evidence type="ECO:0000255" key="3"/>
<evidence type="ECO:0000255" key="4">
    <source>
        <dbReference type="PROSITE-ProRule" id="PRU00159"/>
    </source>
</evidence>
<evidence type="ECO:0000256" key="5">
    <source>
        <dbReference type="SAM" id="MobiDB-lite"/>
    </source>
</evidence>
<evidence type="ECO:0000269" key="6">
    <source>
    </source>
</evidence>
<evidence type="ECO:0000269" key="7">
    <source>
    </source>
</evidence>
<evidence type="ECO:0000269" key="8">
    <source>
    </source>
</evidence>
<evidence type="ECO:0000269" key="9">
    <source>
    </source>
</evidence>
<evidence type="ECO:0000269" key="10">
    <source>
    </source>
</evidence>
<evidence type="ECO:0000303" key="11">
    <source>
    </source>
</evidence>
<evidence type="ECO:0000305" key="12"/>
<evidence type="ECO:0000305" key="13">
    <source>
    </source>
</evidence>
<evidence type="ECO:0000312" key="14">
    <source>
        <dbReference type="FlyBase" id="FBgn0037098"/>
    </source>
</evidence>
<accession>M9PGC5</accession>
<accession>M9PD81</accession>
<accession>M9PG54</accession>
<accession>M9PIH3</accession>
<accession>Q8MTA4</accession>
<dbReference type="EC" id="2.7.11.1" evidence="6 7"/>
<dbReference type="EMBL" id="AE014296">
    <property type="protein sequence ID" value="AGB94864.2"/>
    <property type="molecule type" value="Genomic_DNA"/>
</dbReference>
<dbReference type="EMBL" id="AE014296">
    <property type="protein sequence ID" value="AGB94865.3"/>
    <property type="molecule type" value="Genomic_DNA"/>
</dbReference>
<dbReference type="EMBL" id="AE014296">
    <property type="protein sequence ID" value="AGB94866.2"/>
    <property type="molecule type" value="Genomic_DNA"/>
</dbReference>
<dbReference type="EMBL" id="AE014296">
    <property type="protein sequence ID" value="AGB94867.3"/>
    <property type="molecule type" value="Genomic_DNA"/>
</dbReference>
<dbReference type="EMBL" id="AY118284">
    <property type="protein sequence ID" value="AAM48313.1"/>
    <property type="status" value="ALT_INIT"/>
    <property type="molecule type" value="mRNA"/>
</dbReference>
<dbReference type="RefSeq" id="NP_001262171.2">
    <molecule id="M9PGC5-1"/>
    <property type="nucleotide sequence ID" value="NM_001275242.2"/>
</dbReference>
<dbReference type="RefSeq" id="NP_001262172.3">
    <molecule id="M9PGC5-2"/>
    <property type="nucleotide sequence ID" value="NM_001275243.3"/>
</dbReference>
<dbReference type="RefSeq" id="NP_001262173.2">
    <molecule id="M9PGC5-3"/>
    <property type="nucleotide sequence ID" value="NM_001275244.2"/>
</dbReference>
<dbReference type="RefSeq" id="NP_001262174.3">
    <molecule id="M9PGC5-2"/>
    <property type="nucleotide sequence ID" value="NM_001275245.3"/>
</dbReference>
<dbReference type="SMR" id="M9PGC5"/>
<dbReference type="FunCoup" id="M9PGC5">
    <property type="interactions" value="288"/>
</dbReference>
<dbReference type="STRING" id="7227.FBpp0312393"/>
<dbReference type="GlyGen" id="M9PGC5">
    <property type="glycosylation" value="2 sites"/>
</dbReference>
<dbReference type="iPTMnet" id="M9PGC5"/>
<dbReference type="PaxDb" id="7227-FBpp0305649"/>
<dbReference type="EnsemblMetazoa" id="FBtr0346817">
    <molecule id="M9PGC5-2"/>
    <property type="protein sequence ID" value="FBpp0312392"/>
    <property type="gene ID" value="FBgn0037098"/>
</dbReference>
<dbReference type="EnsemblMetazoa" id="FBtr0346818">
    <molecule id="M9PGC5-1"/>
    <property type="protein sequence ID" value="FBpp0312393"/>
    <property type="gene ID" value="FBgn0037098"/>
</dbReference>
<dbReference type="EnsemblMetazoa" id="FBtr0346819">
    <molecule id="M9PGC5-2"/>
    <property type="protein sequence ID" value="FBpp0312394"/>
    <property type="gene ID" value="FBgn0037098"/>
</dbReference>
<dbReference type="EnsemblMetazoa" id="FBtr0347540">
    <molecule id="M9PGC5-3"/>
    <property type="protein sequence ID" value="FBpp0312580"/>
    <property type="gene ID" value="FBgn0037098"/>
</dbReference>
<dbReference type="GeneID" id="40391"/>
<dbReference type="KEGG" id="dme:Dmel_CG7177"/>
<dbReference type="AGR" id="FB:FBgn0037098"/>
<dbReference type="CTD" id="40391"/>
<dbReference type="FlyBase" id="FBgn0037098">
    <property type="gene designation" value="Wnk"/>
</dbReference>
<dbReference type="VEuPathDB" id="VectorBase:FBgn0037098"/>
<dbReference type="eggNOG" id="KOG0584">
    <property type="taxonomic scope" value="Eukaryota"/>
</dbReference>
<dbReference type="GeneTree" id="ENSGT01030000239929"/>
<dbReference type="HOGENOM" id="CLU_000860_0_0_1"/>
<dbReference type="OMA" id="HNEDKMD"/>
<dbReference type="OrthoDB" id="4062651at2759"/>
<dbReference type="BioGRID-ORCS" id="40391">
    <property type="hits" value="0 hits in 3 CRISPR screens"/>
</dbReference>
<dbReference type="GenomeRNAi" id="40391"/>
<dbReference type="PRO" id="PR:M9PGC5"/>
<dbReference type="Proteomes" id="UP000000803">
    <property type="component" value="Chromosome 3L"/>
</dbReference>
<dbReference type="Bgee" id="FBgn0037098">
    <property type="expression patterns" value="Expressed in spermatocyte cyst cell (Drosophila) in testis and 243 other cell types or tissues"/>
</dbReference>
<dbReference type="ExpressionAtlas" id="M9PGC5">
    <property type="expression patterns" value="baseline and differential"/>
</dbReference>
<dbReference type="GO" id="GO:0005737">
    <property type="term" value="C:cytoplasm"/>
    <property type="evidence" value="ECO:0000250"/>
    <property type="project" value="FlyBase"/>
</dbReference>
<dbReference type="GO" id="GO:0005524">
    <property type="term" value="F:ATP binding"/>
    <property type="evidence" value="ECO:0007669"/>
    <property type="project" value="UniProtKB-KW"/>
</dbReference>
<dbReference type="GO" id="GO:0140693">
    <property type="term" value="F:molecular condensate scaffold activity"/>
    <property type="evidence" value="ECO:0000314"/>
    <property type="project" value="UniProtKB"/>
</dbReference>
<dbReference type="GO" id="GO:0019870">
    <property type="term" value="F:potassium channel inhibitor activity"/>
    <property type="evidence" value="ECO:0000318"/>
    <property type="project" value="GO_Central"/>
</dbReference>
<dbReference type="GO" id="GO:0004672">
    <property type="term" value="F:protein kinase activity"/>
    <property type="evidence" value="ECO:0000314"/>
    <property type="project" value="FlyBase"/>
</dbReference>
<dbReference type="GO" id="GO:0106310">
    <property type="term" value="F:protein serine kinase activity"/>
    <property type="evidence" value="ECO:0007669"/>
    <property type="project" value="RHEA"/>
</dbReference>
<dbReference type="GO" id="GO:0004674">
    <property type="term" value="F:protein serine/threonine kinase activity"/>
    <property type="evidence" value="ECO:0000318"/>
    <property type="project" value="GO_Central"/>
</dbReference>
<dbReference type="GO" id="GO:0006884">
    <property type="term" value="P:cell volume homeostasis"/>
    <property type="evidence" value="ECO:0000314"/>
    <property type="project" value="UniProtKB"/>
</dbReference>
<dbReference type="GO" id="GO:0071474">
    <property type="term" value="P:cellular hyperosmotic response"/>
    <property type="evidence" value="ECO:0000314"/>
    <property type="project" value="UniProtKB"/>
</dbReference>
<dbReference type="GO" id="GO:0035556">
    <property type="term" value="P:intracellular signal transduction"/>
    <property type="evidence" value="ECO:0000318"/>
    <property type="project" value="GO_Central"/>
</dbReference>
<dbReference type="GO" id="GO:0140694">
    <property type="term" value="P:membraneless organelle assembly"/>
    <property type="evidence" value="ECO:0000314"/>
    <property type="project" value="UniProtKB"/>
</dbReference>
<dbReference type="GO" id="GO:0050801">
    <property type="term" value="P:monoatomic ion homeostasis"/>
    <property type="evidence" value="ECO:0000318"/>
    <property type="project" value="GO_Central"/>
</dbReference>
<dbReference type="GO" id="GO:0010766">
    <property type="term" value="P:negative regulation of sodium ion transport"/>
    <property type="evidence" value="ECO:0000318"/>
    <property type="project" value="GO_Central"/>
</dbReference>
<dbReference type="GO" id="GO:0090263">
    <property type="term" value="P:positive regulation of canonical Wnt signaling pathway"/>
    <property type="evidence" value="ECO:0000315"/>
    <property type="project" value="FlyBase"/>
</dbReference>
<dbReference type="GO" id="GO:1903288">
    <property type="term" value="P:positive regulation of potassium ion import across plasma membrane"/>
    <property type="evidence" value="ECO:0000315"/>
    <property type="project" value="FlyBase"/>
</dbReference>
<dbReference type="GO" id="GO:0035220">
    <property type="term" value="P:wing disc development"/>
    <property type="evidence" value="ECO:0000315"/>
    <property type="project" value="FlyBase"/>
</dbReference>
<dbReference type="CDD" id="cd13983">
    <property type="entry name" value="STKc_WNK"/>
    <property type="match status" value="1"/>
</dbReference>
<dbReference type="FunFam" id="3.10.20.90:FF:000279">
    <property type="entry name" value="Blast:Serine/threonine-protein kinase WNK3"/>
    <property type="match status" value="1"/>
</dbReference>
<dbReference type="FunFam" id="3.30.200.20:FF:001054">
    <property type="entry name" value="Serine/threonine-protein kinase WNK1"/>
    <property type="match status" value="1"/>
</dbReference>
<dbReference type="FunFam" id="1.10.510.10:FF:000006">
    <property type="entry name" value="Serine/threonine-protein kinase WNK1 isoform 2"/>
    <property type="match status" value="1"/>
</dbReference>
<dbReference type="Gene3D" id="3.10.20.90">
    <property type="entry name" value="Phosphatidylinositol 3-kinase Catalytic Subunit, Chain A, domain 1"/>
    <property type="match status" value="2"/>
</dbReference>
<dbReference type="Gene3D" id="3.30.200.20">
    <property type="entry name" value="Phosphorylase Kinase, domain 1"/>
    <property type="match status" value="1"/>
</dbReference>
<dbReference type="Gene3D" id="1.10.510.10">
    <property type="entry name" value="Transferase(Phosphotransferase) domain 1"/>
    <property type="match status" value="1"/>
</dbReference>
<dbReference type="InterPro" id="IPR056865">
    <property type="entry name" value="CCTL2_WNK"/>
</dbReference>
<dbReference type="InterPro" id="IPR011009">
    <property type="entry name" value="Kinase-like_dom_sf"/>
</dbReference>
<dbReference type="InterPro" id="IPR024678">
    <property type="entry name" value="Kinase_OSR1/WNK_CCT"/>
</dbReference>
<dbReference type="InterPro" id="IPR000719">
    <property type="entry name" value="Prot_kinase_dom"/>
</dbReference>
<dbReference type="InterPro" id="IPR008271">
    <property type="entry name" value="Ser/Thr_kinase_AS"/>
</dbReference>
<dbReference type="InterPro" id="IPR050588">
    <property type="entry name" value="WNK_Ser-Thr_kinase"/>
</dbReference>
<dbReference type="PANTHER" id="PTHR13902">
    <property type="entry name" value="SERINE/THREONINE-PROTEIN KINASE WNK WITH NO LYSINE -RELATED"/>
    <property type="match status" value="1"/>
</dbReference>
<dbReference type="Pfam" id="PF24889">
    <property type="entry name" value="CCTL2_WNK"/>
    <property type="match status" value="1"/>
</dbReference>
<dbReference type="Pfam" id="PF12202">
    <property type="entry name" value="OSR1_C"/>
    <property type="match status" value="1"/>
</dbReference>
<dbReference type="Pfam" id="PF00069">
    <property type="entry name" value="Pkinase"/>
    <property type="match status" value="1"/>
</dbReference>
<dbReference type="SMART" id="SM00220">
    <property type="entry name" value="S_TKc"/>
    <property type="match status" value="1"/>
</dbReference>
<dbReference type="SUPFAM" id="SSF56112">
    <property type="entry name" value="Protein kinase-like (PK-like)"/>
    <property type="match status" value="1"/>
</dbReference>
<dbReference type="PROSITE" id="PS50011">
    <property type="entry name" value="PROTEIN_KINASE_DOM"/>
    <property type="match status" value="1"/>
</dbReference>
<dbReference type="PROSITE" id="PS00108">
    <property type="entry name" value="PROTEIN_KINASE_ST"/>
    <property type="match status" value="1"/>
</dbReference>
<proteinExistence type="evidence at protein level"/>
<feature type="chain" id="PRO_0000458630" description="Serine/threonine-protein kinase Wnk">
    <location>
        <begin position="1"/>
        <end position="2462"/>
    </location>
</feature>
<feature type="domain" description="Protein kinase" evidence="4">
    <location>
        <begin position="471"/>
        <end position="729"/>
    </location>
</feature>
<feature type="region of interest" description="Disordered" evidence="5">
    <location>
        <begin position="18"/>
        <end position="133"/>
    </location>
</feature>
<feature type="region of interest" description="Disordered" evidence="5">
    <location>
        <begin position="146"/>
        <end position="248"/>
    </location>
</feature>
<feature type="region of interest" description="Disordered" evidence="5">
    <location>
        <begin position="365"/>
        <end position="461"/>
    </location>
</feature>
<feature type="region of interest" description="Disordered" evidence="5">
    <location>
        <begin position="844"/>
        <end position="873"/>
    </location>
</feature>
<feature type="region of interest" description="Disordered" evidence="5">
    <location>
        <begin position="893"/>
        <end position="923"/>
    </location>
</feature>
<feature type="region of interest" description="Disordered" evidence="5">
    <location>
        <begin position="1006"/>
        <end position="1055"/>
    </location>
</feature>
<feature type="region of interest" description="Disordered" evidence="5">
    <location>
        <begin position="1236"/>
        <end position="1256"/>
    </location>
</feature>
<feature type="region of interest" description="Disordered" evidence="5">
    <location>
        <begin position="1322"/>
        <end position="1382"/>
    </location>
</feature>
<feature type="region of interest" description="Disordered" evidence="5">
    <location>
        <begin position="1418"/>
        <end position="1465"/>
    </location>
</feature>
<feature type="region of interest" description="Disordered" evidence="5">
    <location>
        <begin position="1554"/>
        <end position="1578"/>
    </location>
</feature>
<feature type="region of interest" description="Disordered" evidence="5">
    <location>
        <begin position="1615"/>
        <end position="1699"/>
    </location>
</feature>
<feature type="region of interest" description="Disordered" evidence="5">
    <location>
        <begin position="1762"/>
        <end position="1790"/>
    </location>
</feature>
<feature type="region of interest" description="Disordered" evidence="5">
    <location>
        <begin position="1828"/>
        <end position="1895"/>
    </location>
</feature>
<feature type="region of interest" description="Disordered" evidence="5">
    <location>
        <begin position="1929"/>
        <end position="1966"/>
    </location>
</feature>
<feature type="region of interest" description="Disordered" evidence="5">
    <location>
        <begin position="2122"/>
        <end position="2229"/>
    </location>
</feature>
<feature type="coiled-coil region" evidence="3">
    <location>
        <begin position="1142"/>
        <end position="1178"/>
    </location>
</feature>
<feature type="compositionally biased region" description="Polar residues" evidence="5">
    <location>
        <begin position="29"/>
        <end position="58"/>
    </location>
</feature>
<feature type="compositionally biased region" description="Polar residues" evidence="5">
    <location>
        <begin position="65"/>
        <end position="78"/>
    </location>
</feature>
<feature type="compositionally biased region" description="Low complexity" evidence="5">
    <location>
        <begin position="94"/>
        <end position="124"/>
    </location>
</feature>
<feature type="compositionally biased region" description="Polar residues" evidence="5">
    <location>
        <begin position="146"/>
        <end position="155"/>
    </location>
</feature>
<feature type="compositionally biased region" description="Basic and acidic residues" evidence="5">
    <location>
        <begin position="190"/>
        <end position="205"/>
    </location>
</feature>
<feature type="compositionally biased region" description="Basic and acidic residues" evidence="5">
    <location>
        <begin position="237"/>
        <end position="247"/>
    </location>
</feature>
<feature type="compositionally biased region" description="Basic and acidic residues" evidence="5">
    <location>
        <begin position="396"/>
        <end position="413"/>
    </location>
</feature>
<feature type="compositionally biased region" description="Low complexity" evidence="5">
    <location>
        <begin position="414"/>
        <end position="452"/>
    </location>
</feature>
<feature type="compositionally biased region" description="Acidic residues" evidence="5">
    <location>
        <begin position="855"/>
        <end position="870"/>
    </location>
</feature>
<feature type="compositionally biased region" description="Polar residues" evidence="5">
    <location>
        <begin position="893"/>
        <end position="918"/>
    </location>
</feature>
<feature type="compositionally biased region" description="Low complexity" evidence="5">
    <location>
        <begin position="1006"/>
        <end position="1034"/>
    </location>
</feature>
<feature type="compositionally biased region" description="Low complexity" evidence="5">
    <location>
        <begin position="1041"/>
        <end position="1055"/>
    </location>
</feature>
<feature type="compositionally biased region" description="Polar residues" evidence="5">
    <location>
        <begin position="1236"/>
        <end position="1251"/>
    </location>
</feature>
<feature type="compositionally biased region" description="Basic residues" evidence="5">
    <location>
        <begin position="1559"/>
        <end position="1568"/>
    </location>
</feature>
<feature type="compositionally biased region" description="Low complexity" evidence="5">
    <location>
        <begin position="1627"/>
        <end position="1641"/>
    </location>
</feature>
<feature type="compositionally biased region" description="Polar residues" evidence="5">
    <location>
        <begin position="1642"/>
        <end position="1674"/>
    </location>
</feature>
<feature type="compositionally biased region" description="Polar residues" evidence="5">
    <location>
        <begin position="1828"/>
        <end position="1852"/>
    </location>
</feature>
<feature type="compositionally biased region" description="Polar residues" evidence="5">
    <location>
        <begin position="1861"/>
        <end position="1894"/>
    </location>
</feature>
<feature type="compositionally biased region" description="Polar residues" evidence="5">
    <location>
        <begin position="1943"/>
        <end position="1966"/>
    </location>
</feature>
<feature type="compositionally biased region" description="Low complexity" evidence="5">
    <location>
        <begin position="2125"/>
        <end position="2136"/>
    </location>
</feature>
<feature type="compositionally biased region" description="Polar residues" evidence="5">
    <location>
        <begin position="2137"/>
        <end position="2160"/>
    </location>
</feature>
<feature type="compositionally biased region" description="Low complexity" evidence="5">
    <location>
        <begin position="2161"/>
        <end position="2211"/>
    </location>
</feature>
<feature type="compositionally biased region" description="Polar residues" evidence="5">
    <location>
        <begin position="2212"/>
        <end position="2229"/>
    </location>
</feature>
<feature type="active site" description="Proton acceptor" evidence="13">
    <location>
        <position position="618"/>
    </location>
</feature>
<feature type="binding site" evidence="1">
    <location>
        <position position="481"/>
    </location>
    <ligand>
        <name>ATP</name>
        <dbReference type="ChEBI" id="CHEBI:30616"/>
    </ligand>
</feature>
<feature type="binding site" evidence="1">
    <location>
        <begin position="551"/>
        <end position="554"/>
    </location>
    <ligand>
        <name>ATP</name>
        <dbReference type="ChEBI" id="CHEBI:30616"/>
    </ligand>
</feature>
<feature type="binding site" evidence="1">
    <location>
        <position position="601"/>
    </location>
    <ligand>
        <name>ATP</name>
        <dbReference type="ChEBI" id="CHEBI:30616"/>
    </ligand>
</feature>
<feature type="modified residue" description="Phosphoserine; by autocatalysis" evidence="1">
    <location>
        <position position="628"/>
    </location>
</feature>
<feature type="modified residue" description="Phosphoserine; by autocatalysis" evidence="8">
    <location>
        <position position="632"/>
    </location>
</feature>
<feature type="splice variant" id="VSP_061957" description="In isoform 3.">
    <location>
        <begin position="1"/>
        <end position="198"/>
    </location>
</feature>
<feature type="splice variant" id="VSP_061958" description="In isoform 2 and isoform 3.">
    <location>
        <begin position="1549"/>
        <end position="1569"/>
    </location>
</feature>
<feature type="mutagenesis site" description="Loss of kinase activity." evidence="6">
    <original>D</original>
    <variation>A</variation>
    <location>
        <position position="618"/>
    </location>
</feature>
<sequence>MGQTLCDFVRQQEVVPANRARKGSAISEDGTTSCTTQPQRNTSISSEEQTVQGANIQKSGHRSFNRSASSRQKPNPTSKLKDTLNRKPTCKQGTLSAHTSTSSTTSIQSSPIEPASSLPTLNTTPTPPAASKSNLFVRVLRRFSNNTLPGKTASSPKNVDDVPKVNDNNNGDLGKQQSTDVEVLCSQDNQSREQNEDEMDSKIEPADAISNQKAGLTSGKPKKDKSVKGTSQAVVSDTKKMEARKSSSDTVIEPLIKQQAPLHSSKTTPTTLTANFVQNIRFVRKNVEQSGRNTNPLQFVELETEFPRDYDDNIEMLSREAEHLEEQFRTPTRSNATDATSHHVAGIIDNIITEASRSLTIEKTEDDVPLKSSTKHSSGVKRVGFQVEDKDDTEVQSEKQAKSFDDITKKAESSEASAEEAAVTGSSTDASASPLPSTSLVSTTSSATSITKSKSDEDDDPVAMSPCGRFFKYDKEVGRGSFKTVYRGLDTLTGVPVAWCELLDKQVKKSERTRFREEADMLKKLQHPNIVRFYTYWEFPIGRKKNIVLVTELMLSGTLKSYLKRFKKIHPKVLKSWCRQILKGLNFLHTRQFPIIHRDLKCDNIFITGTTGSVKIGDLGLATLKNRSHAKSVIGTPEFMAPEMYEEHYDESVDVYAFGMCMLEMAISEYPYSECKGPAQIYKKVISGIKPAALAKVEDPNVRDIIERCIELKKEDRPSCNELLESEFFDEDIGIRVEPTASEQFLSDPSISIIEFRLRFMDPKKRSSRHKENEAIQFEYNIRHDEYEQIAQEMMKENIISEDDSRAVARLLKVQVVSLLKERAQRQTQIKLQNEKSRLEKLALQKQRESLPTNVDEDEEEEEESEDEEDGVKWNQRLQLRYDLLNTDSETSLALSTNSVEPQQLSTRSNTSIPNSGIQQPVQVPGQVPVSQLISVQPQAIPSPAIPMQQKPTVHYIQPPQLASYQNSNASMQEMTNNQVISPTGSQQMQQQQPVVAPTVNHQVMPQQQVNQQQQQPQMMQQIPQQVQVQQPQTVLPPQPHEQQPQQQQQPLQQQLQQLMHTNVQAPDLTQQQQMAQQQAQQYFQQQQQQPQQAVNMQQAYAMQQAGQQQQLSQPLQIQQQILQQQQVAVSHQQQIMQQQLAQHQLQQLQQQQLQQQQLQQQQQIQQQQLQQQQLQQQQFVQQYAQAMPQQQHQQLVTGSQVMAPHQHQQPIQIPVQMQVPPTSVAPPIQHTYNQQGGQVTLSDAQQQQHPGFSAVPQQAAPFIQQPTQQPIQLSMPLEQQLQQLLHSQPAQQQQAMSQQQQQPLVQQQQLPLVQQQPPLVQQQQPLVQHQQPSVQHQQPLVQQPQQQQPQPQNQQPQPQTQQTHVVQQQPPQQQPAVEQISQISSQVPVQQENLQPIQVNKDANVATDAMSLNSAHGALEPAPKTEPQNSADAEKQQKQTGTGTRSQKPRRSNRSGNERIPKLSVTSVDEGSVINCHMENKLKTITFKFDIGDVNPVEIANKLIAQDLLSNCQSTVFVEMINEIVDQVKQNPNQIPIPTNYRRNIEKVRHASLTRQRSTFRSHQRHRSRDETASDITKMFEPTIHGVETLPSGGGGAEQSNCNLTLEARSHLSNIPNAKEPQLNVSTPPTTTSTMSSSSTASRDAPNSSNDVTIGSGSVSRKTSTASEYTSLSIDYMPDSNITPTGPEPPLDDGKDKKPCSLAIARMQKLLESAGNGAPRSLNLPLNRHLKIQEDLKHTRSLDDLTAVKITFDMPNKAALDTSENAQQATEAEAEKPKDKSGQAVGNQGTGAANTLEQLKIELENITHAHAFASAVVASINNRAPHQASPAMSSLKATSGQPQTQEITKPNNGAGPSVPSVGQNTPTAALTSARGSGSSVYNSRRTSIDNSVGSDMHLHTATNLEGTVSNPDPIPTEASVGITIATGHEKQLSKQPSLEKPSATSILTNNSDPPQRNPSNGSINQNSIADLEKKLAALRNTENTEESATATLSVVPKQVEEVVNPSARKISRFSVSRVQEQKTSTGVEEPAQGQLKIDLQVAGPGGQVQTNNSVQNGSVVNTPTEVISSPIQNVPLAINGIQLMYQQPQQIHQLPGGTSTTTSGAGTQCIVVPQVVNQNGTHVQQPSNLQPQQQSVHPNMTQQPQQTPLNGHPSMVNTLQQQPPQQSLPMQTIQSQQQQHNQMPIISQQQQQQILMQQQQQQGSQQGSQQFNLPGTQQTHPQHQFIQSQPNQLHSLPPQVVSMAQGNLPHQLPPMQTMGAQQQMISQQQHQLQMQSHMHQQNVPGMYNQQTGARVAAPQNFAGAVPNHLLQQSPLMASQQPAQPMQHVMQPIFNATSGEVTEEPVSLAATHPHLLPSDIQSDIKHNLDSLVNQLCNTRLGTNQHQRLLLLRQRQLIEEDELRLKHYVEYEKFQKALRQSISTNVPANAAYYSAAAAQLPTNLAAPAAPSSSNPTSTSSANT</sequence>
<organism>
    <name type="scientific">Drosophila melanogaster</name>
    <name type="common">Fruit fly</name>
    <dbReference type="NCBI Taxonomy" id="7227"/>
    <lineage>
        <taxon>Eukaryota</taxon>
        <taxon>Metazoa</taxon>
        <taxon>Ecdysozoa</taxon>
        <taxon>Arthropoda</taxon>
        <taxon>Hexapoda</taxon>
        <taxon>Insecta</taxon>
        <taxon>Pterygota</taxon>
        <taxon>Neoptera</taxon>
        <taxon>Endopterygota</taxon>
        <taxon>Diptera</taxon>
        <taxon>Brachycera</taxon>
        <taxon>Muscomorpha</taxon>
        <taxon>Ephydroidea</taxon>
        <taxon>Drosophilidae</taxon>
        <taxon>Drosophila</taxon>
        <taxon>Sophophora</taxon>
    </lineage>
</organism>
<name>WNK_DROME</name>
<gene>
    <name evidence="11 14" type="primary">Wnk</name>
    <name evidence="14" type="ORF">CG7177</name>
</gene>
<reference key="1">
    <citation type="journal article" date="2000" name="Science">
        <title>The genome sequence of Drosophila melanogaster.</title>
        <authorList>
            <person name="Adams M.D."/>
            <person name="Celniker S.E."/>
            <person name="Holt R.A."/>
            <person name="Evans C.A."/>
            <person name="Gocayne J.D."/>
            <person name="Amanatides P.G."/>
            <person name="Scherer S.E."/>
            <person name="Li P.W."/>
            <person name="Hoskins R.A."/>
            <person name="Galle R.F."/>
            <person name="George R.A."/>
            <person name="Lewis S.E."/>
            <person name="Richards S."/>
            <person name="Ashburner M."/>
            <person name="Henderson S.N."/>
            <person name="Sutton G.G."/>
            <person name="Wortman J.R."/>
            <person name="Yandell M.D."/>
            <person name="Zhang Q."/>
            <person name="Chen L.X."/>
            <person name="Brandon R.C."/>
            <person name="Rogers Y.-H.C."/>
            <person name="Blazej R.G."/>
            <person name="Champe M."/>
            <person name="Pfeiffer B.D."/>
            <person name="Wan K.H."/>
            <person name="Doyle C."/>
            <person name="Baxter E.G."/>
            <person name="Helt G."/>
            <person name="Nelson C.R."/>
            <person name="Miklos G.L.G."/>
            <person name="Abril J.F."/>
            <person name="Agbayani A."/>
            <person name="An H.-J."/>
            <person name="Andrews-Pfannkoch C."/>
            <person name="Baldwin D."/>
            <person name="Ballew R.M."/>
            <person name="Basu A."/>
            <person name="Baxendale J."/>
            <person name="Bayraktaroglu L."/>
            <person name="Beasley E.M."/>
            <person name="Beeson K.Y."/>
            <person name="Benos P.V."/>
            <person name="Berman B.P."/>
            <person name="Bhandari D."/>
            <person name="Bolshakov S."/>
            <person name="Borkova D."/>
            <person name="Botchan M.R."/>
            <person name="Bouck J."/>
            <person name="Brokstein P."/>
            <person name="Brottier P."/>
            <person name="Burtis K.C."/>
            <person name="Busam D.A."/>
            <person name="Butler H."/>
            <person name="Cadieu E."/>
            <person name="Center A."/>
            <person name="Chandra I."/>
            <person name="Cherry J.M."/>
            <person name="Cawley S."/>
            <person name="Dahlke C."/>
            <person name="Davenport L.B."/>
            <person name="Davies P."/>
            <person name="de Pablos B."/>
            <person name="Delcher A."/>
            <person name="Deng Z."/>
            <person name="Mays A.D."/>
            <person name="Dew I."/>
            <person name="Dietz S.M."/>
            <person name="Dodson K."/>
            <person name="Doup L.E."/>
            <person name="Downes M."/>
            <person name="Dugan-Rocha S."/>
            <person name="Dunkov B.C."/>
            <person name="Dunn P."/>
            <person name="Durbin K.J."/>
            <person name="Evangelista C.C."/>
            <person name="Ferraz C."/>
            <person name="Ferriera S."/>
            <person name="Fleischmann W."/>
            <person name="Fosler C."/>
            <person name="Gabrielian A.E."/>
            <person name="Garg N.S."/>
            <person name="Gelbart W.M."/>
            <person name="Glasser K."/>
            <person name="Glodek A."/>
            <person name="Gong F."/>
            <person name="Gorrell J.H."/>
            <person name="Gu Z."/>
            <person name="Guan P."/>
            <person name="Harris M."/>
            <person name="Harris N.L."/>
            <person name="Harvey D.A."/>
            <person name="Heiman T.J."/>
            <person name="Hernandez J.R."/>
            <person name="Houck J."/>
            <person name="Hostin D."/>
            <person name="Houston K.A."/>
            <person name="Howland T.J."/>
            <person name="Wei M.-H."/>
            <person name="Ibegwam C."/>
            <person name="Jalali M."/>
            <person name="Kalush F."/>
            <person name="Karpen G.H."/>
            <person name="Ke Z."/>
            <person name="Kennison J.A."/>
            <person name="Ketchum K.A."/>
            <person name="Kimmel B.E."/>
            <person name="Kodira C.D."/>
            <person name="Kraft C.L."/>
            <person name="Kravitz S."/>
            <person name="Kulp D."/>
            <person name="Lai Z."/>
            <person name="Lasko P."/>
            <person name="Lei Y."/>
            <person name="Levitsky A.A."/>
            <person name="Li J.H."/>
            <person name="Li Z."/>
            <person name="Liang Y."/>
            <person name="Lin X."/>
            <person name="Liu X."/>
            <person name="Mattei B."/>
            <person name="McIntosh T.C."/>
            <person name="McLeod M.P."/>
            <person name="McPherson D."/>
            <person name="Merkulov G."/>
            <person name="Milshina N.V."/>
            <person name="Mobarry C."/>
            <person name="Morris J."/>
            <person name="Moshrefi A."/>
            <person name="Mount S.M."/>
            <person name="Moy M."/>
            <person name="Murphy B."/>
            <person name="Murphy L."/>
            <person name="Muzny D.M."/>
            <person name="Nelson D.L."/>
            <person name="Nelson D.R."/>
            <person name="Nelson K.A."/>
            <person name="Nixon K."/>
            <person name="Nusskern D.R."/>
            <person name="Pacleb J.M."/>
            <person name="Palazzolo M."/>
            <person name="Pittman G.S."/>
            <person name="Pan S."/>
            <person name="Pollard J."/>
            <person name="Puri V."/>
            <person name="Reese M.G."/>
            <person name="Reinert K."/>
            <person name="Remington K."/>
            <person name="Saunders R.D.C."/>
            <person name="Scheeler F."/>
            <person name="Shen H."/>
            <person name="Shue B.C."/>
            <person name="Siden-Kiamos I."/>
            <person name="Simpson M."/>
            <person name="Skupski M.P."/>
            <person name="Smith T.J."/>
            <person name="Spier E."/>
            <person name="Spradling A.C."/>
            <person name="Stapleton M."/>
            <person name="Strong R."/>
            <person name="Sun E."/>
            <person name="Svirskas R."/>
            <person name="Tector C."/>
            <person name="Turner R."/>
            <person name="Venter E."/>
            <person name="Wang A.H."/>
            <person name="Wang X."/>
            <person name="Wang Z.-Y."/>
            <person name="Wassarman D.A."/>
            <person name="Weinstock G.M."/>
            <person name="Weissenbach J."/>
            <person name="Williams S.M."/>
            <person name="Woodage T."/>
            <person name="Worley K.C."/>
            <person name="Wu D."/>
            <person name="Yang S."/>
            <person name="Yao Q.A."/>
            <person name="Ye J."/>
            <person name="Yeh R.-F."/>
            <person name="Zaveri J.S."/>
            <person name="Zhan M."/>
            <person name="Zhang G."/>
            <person name="Zhao Q."/>
            <person name="Zheng L."/>
            <person name="Zheng X.H."/>
            <person name="Zhong F.N."/>
            <person name="Zhong W."/>
            <person name="Zhou X."/>
            <person name="Zhu S.C."/>
            <person name="Zhu X."/>
            <person name="Smith H.O."/>
            <person name="Gibbs R.A."/>
            <person name="Myers E.W."/>
            <person name="Rubin G.M."/>
            <person name="Venter J.C."/>
        </authorList>
    </citation>
    <scope>NUCLEOTIDE SEQUENCE [LARGE SCALE GENOMIC DNA]</scope>
    <source>
        <strain>Berkeley</strain>
    </source>
</reference>
<reference key="2">
    <citation type="journal article" date="2002" name="Genome Biol.">
        <title>A Drosophila full-length cDNA resource.</title>
        <authorList>
            <person name="Stapleton M."/>
            <person name="Carlson J.W."/>
            <person name="Brokstein P."/>
            <person name="Yu C."/>
            <person name="Champe M."/>
            <person name="George R.A."/>
            <person name="Guarin H."/>
            <person name="Kronmiller B."/>
            <person name="Pacleb J.M."/>
            <person name="Park S."/>
            <person name="Wan K.H."/>
            <person name="Rubin G.M."/>
            <person name="Celniker S.E."/>
        </authorList>
    </citation>
    <scope>NUCLEOTIDE SEQUENCE [LARGE SCALE MRNA] OF 1819-2462</scope>
    <source>
        <strain>Berkeley</strain>
        <tissue>Testis</tissue>
    </source>
</reference>
<reference key="3">
    <citation type="journal article" date="2013" name="EMBO Rep.">
        <title>Wnk kinases are positive regulators of canonical Wnt/beta-catenin signalling.</title>
        <authorList>
            <person name="Serysheva E."/>
            <person name="Berhane H."/>
            <person name="Grumolato L."/>
            <person name="Demir K."/>
            <person name="Balmer S."/>
            <person name="Bodak M."/>
            <person name="Boutros M."/>
            <person name="Aaronson S."/>
            <person name="Mlodzik M."/>
            <person name="Jenny A."/>
        </authorList>
    </citation>
    <scope>FUNCTION</scope>
    <scope>CATALYTIC ACTIVITY</scope>
    <scope>AUTOPHOSPHORYLATION</scope>
    <scope>MUTAGENESIS OF ASP-618</scope>
</reference>
<reference key="4">
    <citation type="journal article" date="2014" name="J. Biol. Chem.">
        <title>Hypotonicity stimulates potassium flux through the WNK-SPAK/OSR1 kinase cascade and the Ncc69 sodium-potassium-2-chloride cotransporter in the Drosophila renal tubule.</title>
        <authorList>
            <person name="Wu Y."/>
            <person name="Schellinger J.N."/>
            <person name="Huang C.L."/>
            <person name="Rodan A.R."/>
        </authorList>
    </citation>
    <scope>FUNCTION</scope>
    <scope>CATALYTIC ACTIVITY</scope>
</reference>
<reference key="5">
    <citation type="journal article" date="2021" name="Am. J. Physiol.">
        <title>WNKs are potassium-sensitive kinases.</title>
        <authorList>
            <person name="Pleinis J.M."/>
            <person name="Norrell L."/>
            <person name="Akella R."/>
            <person name="Humphreys J.M."/>
            <person name="He H."/>
            <person name="Sun Q."/>
            <person name="Zhang F."/>
            <person name="Sosa-Pagan J."/>
            <person name="Morrison D.E."/>
            <person name="Schellinger J.N."/>
            <person name="Jackson L.K."/>
            <person name="Goldsmith E.J."/>
            <person name="Rodan A.R."/>
        </authorList>
    </citation>
    <scope>PHOSPHORYLATION AT SER-632</scope>
    <scope>ACTIVITY REGULATION</scope>
</reference>
<reference key="6">
    <citation type="journal article" date="2022" name="Cell">
        <title>WNK kinases sense molecular crowding and rescue cell volume via phase separation.</title>
        <authorList>
            <person name="Boyd-Shiwarski C.R."/>
            <person name="Shiwarski D.J."/>
            <person name="Griffiths S.E."/>
            <person name="Beacham R.T."/>
            <person name="Norrell L."/>
            <person name="Morrison D.E."/>
            <person name="Wang J."/>
            <person name="Mann J."/>
            <person name="Tennant W."/>
            <person name="Anderson E.N."/>
            <person name="Franks J."/>
            <person name="Calderon M."/>
            <person name="Connolly K.A."/>
            <person name="Cheema M.U."/>
            <person name="Weaver C.J."/>
            <person name="Nkashama L.J."/>
            <person name="Weckerly C.C."/>
            <person name="Querry K.E."/>
            <person name="Pandey U.B."/>
            <person name="Donnelly C.J."/>
            <person name="Sun D."/>
            <person name="Rodan A.R."/>
            <person name="Subramanya A.R."/>
        </authorList>
    </citation>
    <scope>FUNCTION</scope>
    <scope>ACTIVITY REGULATION</scope>
</reference>
<reference key="7">
    <citation type="journal article" date="2022" name="Curr. Biol.">
        <title>Chloride oscillation in pacemaker neurons regulates circadian rhythms through a chloride-sensing WNK kinase signaling cascade.</title>
        <authorList>
            <person name="Schellinger J.N."/>
            <person name="Sun Q."/>
            <person name="Pleinis J.M."/>
            <person name="An S.W."/>
            <person name="Hu J."/>
            <person name="Mercenne G."/>
            <person name="Titos I."/>
            <person name="Huang C.L."/>
            <person name="Rothenfluh A."/>
            <person name="Rodan A.R."/>
        </authorList>
    </citation>
    <scope>FUNCTION</scope>
    <scope>ACTIVITY REGULATION</scope>
</reference>
<comment type="function">
    <text evidence="6 7 9 10">Serine/threonine-protein kinase component of the WNK-SPAK/OSR1 kinase cascade, which plays an important role in the regulation of electrolyte homeostasis and regulatory volume increase in response to hyperosmotic stress (PubMed:23797875, PubMed:25086033, PubMed:36318922). Wnk mediates regulatory volume increase in response to hyperosmotic stress by acting as a molecular crowding sensor, which senses cell shrinkage and mediates formation of a membraneless compartment by undergoing liquid-liquid phase separation (PubMed:36318922). The membraneless compartment concentrates Wnk with its substrate Fray, promoting Wnk-dependent phosphorylation and activation of downstream kinase Fray. Following activation, Fray catalyzes phosphorylation of ion cotransporters Ncc69 and Irk1, regulating their activity (PubMed:25086033, PubMed:35303418, PubMed:36318922). Phosphorylation of Na-K-Cl cotransporter Ncc69 promotes its activation and ion influx (PubMed:25086033). Involved in circadian rhythms in small ventral lateral (sLNv) pacemaker neurons: in the morning, Wnk activity is repressed by high levels of intracellular chloride; in contrast Wnk activation in the evening promotes the activation of the inwardly rectifying potassium channel Irk1 via Fray (PubMed:35303418). Acts as a positive regulator of the canonical Wnt signaling pathway during wing disk development (PubMed:23797875).</text>
</comment>
<comment type="catalytic activity">
    <reaction evidence="6 7">
        <text>L-seryl-[protein] + ATP = O-phospho-L-seryl-[protein] + ADP + H(+)</text>
        <dbReference type="Rhea" id="RHEA:17989"/>
        <dbReference type="Rhea" id="RHEA-COMP:9863"/>
        <dbReference type="Rhea" id="RHEA-COMP:11604"/>
        <dbReference type="ChEBI" id="CHEBI:15378"/>
        <dbReference type="ChEBI" id="CHEBI:29999"/>
        <dbReference type="ChEBI" id="CHEBI:30616"/>
        <dbReference type="ChEBI" id="CHEBI:83421"/>
        <dbReference type="ChEBI" id="CHEBI:456216"/>
        <dbReference type="EC" id="2.7.11.1"/>
    </reaction>
</comment>
<comment type="catalytic activity">
    <reaction evidence="6 7">
        <text>L-threonyl-[protein] + ATP = O-phospho-L-threonyl-[protein] + ADP + H(+)</text>
        <dbReference type="Rhea" id="RHEA:46608"/>
        <dbReference type="Rhea" id="RHEA-COMP:11060"/>
        <dbReference type="Rhea" id="RHEA-COMP:11605"/>
        <dbReference type="ChEBI" id="CHEBI:15378"/>
        <dbReference type="ChEBI" id="CHEBI:30013"/>
        <dbReference type="ChEBI" id="CHEBI:30616"/>
        <dbReference type="ChEBI" id="CHEBI:61977"/>
        <dbReference type="ChEBI" id="CHEBI:456216"/>
        <dbReference type="EC" id="2.7.11.1"/>
    </reaction>
</comment>
<comment type="cofactor">
    <cofactor evidence="2">
        <name>Mg(2+)</name>
        <dbReference type="ChEBI" id="CHEBI:18420"/>
    </cofactor>
</comment>
<comment type="activity regulation">
    <text evidence="8 9 10">Activated in response to hyperosmotic stress: cell shrinkage promotes formation of a membraneless compartment that concentrates wnk-1 with its downstrem substrates (PubMed:36318922). Activation requires autophosphorylation (PubMed:33439774). Autophosphorylation and subsequent activation is inhibited by increases in intracellular Cl(-) or K(+) (PubMed:33439774, PubMed:35303418).</text>
</comment>
<comment type="subcellular location">
    <subcellularLocation>
        <location evidence="1">Cytoplasm</location>
    </subcellularLocation>
    <text evidence="1">Mediates formation and localizes to cytoplasmic membraneless compartment in response to hyperosmotic stress.</text>
</comment>
<comment type="alternative products">
    <event type="alternative splicing"/>
    <isoform>
        <id>M9PGC5-1</id>
        <name>1</name>
        <sequence type="displayed"/>
    </isoform>
    <isoform>
        <id>M9PGC5-2</id>
        <name>2</name>
        <sequence type="described" ref="VSP_061958"/>
    </isoform>
    <isoform>
        <id>M9PGC5-3</id>
        <name>3</name>
        <sequence type="described" ref="VSP_061957 VSP_061958"/>
    </isoform>
</comment>
<comment type="domain">
    <text evidence="1">Disordered regions undergo liquid-liquid phase separation (LLPS) for the formation of a cytoplasmic membraneless compartment that concentrates Wnk with its downstream substrates.</text>
</comment>
<comment type="PTM">
    <text evidence="1 6">Autophosphorylated (PubMed:23797875). Autophosphorylation at Ser-628 and Ser-632 promotes its activity (By similarity).</text>
</comment>
<comment type="similarity">
    <text evidence="12">Belongs to the protein kinase superfamily. Ser/Thr protein kinase family. WNK subfamily.</text>
</comment>
<comment type="sequence caution" evidence="12">
    <conflict type="erroneous initiation">
        <sequence resource="EMBL-CDS" id="AAM48313"/>
    </conflict>
    <text>Truncated N-terminus.</text>
</comment>
<protein>
    <recommendedName>
        <fullName evidence="12">Serine/threonine-protein kinase Wnk</fullName>
        <ecNumber evidence="6 7">2.7.11.1</ecNumber>
    </recommendedName>
    <alternativeName>
        <fullName evidence="12">Protein kinase with no lysine</fullName>
    </alternativeName>
</protein>